<name>LEC3A_HALCE</name>
<accession>C0HK22</accession>
<keyword id="KW-0903">Direct protein sequencing</keyword>
<keyword id="KW-0325">Glycoprotein</keyword>
<keyword id="KW-0430">Lectin</keyword>
<comment type="function">
    <text evidence="2">Lectin with affinity for N-acetyl-galactosamine, carragenan and glycoprotein porcine stomach mucin (PSM). Has metal-independent hemagglutinating activity towards erythrocytes from rabbit and human. Hemagglutinating activity is not inhibited by D-galactose, D-glucose, D-mannose, D-fucose, methyl-alpha-D-galactopyranoside, methyl-alpha-D-glucopyranoside, N-acetyl-glucosamine, N-acetyl-mannosamine, D-fructose, alpha-D-lactose, beta-D-lactose, D-lactulose, D-sucrose, fucoidan or glycoproteins thyroglobulin and ovalmucoid.</text>
</comment>
<comment type="biophysicochemical properties">
    <phDependence>
        <text evidence="2">Optimum pH is 6-7 for hemagglutinating activity. Activity drops rapidly at lower or higher pH.</text>
    </phDependence>
    <temperatureDependence>
        <text evidence="2">Thermostable. Retains hemagglutinating activity after incubation at 60 degrees Celsius for 1 hour. At higher temperatures activity drops drastically.</text>
    </temperatureDependence>
</comment>
<comment type="subunit">
    <text evidence="2">Probable heterotrimer consisting of an alpha chain and two beta chains. The alpha chain can probably have different glycosylation states.</text>
</comment>
<comment type="PTM">
    <text evidence="2">Glycosylated.</text>
</comment>
<comment type="mass spectrometry" mass="18290.0" error="2.0" method="Electrospray" evidence="2"/>
<comment type="mass spectrometry" mass="20393.0" error="2.0" method="Electrospray" evidence="2">
    <text>Alpha chain with a higher glycosylation state or another modification, referred to as alpha'.</text>
</comment>
<reference evidence="4" key="1">
    <citation type="journal article" date="2013" name="Int. J. Biochem. Cell Biol.">
        <title>H-3, a new lectin from the marine sponge Haliclona caerulea: purification and mass spectrometric characterization.</title>
        <authorList>
            <person name="Carneiro R.F."/>
            <person name="de Melo A.A."/>
            <person name="de Almeida A.S."/>
            <person name="Moura Rda M."/>
            <person name="Chaves R.P."/>
            <person name="de Sousa B.L."/>
            <person name="do Nascimento K.S."/>
            <person name="Sampaio S.S."/>
            <person name="Lima J.P."/>
            <person name="Cavada B.S."/>
            <person name="Nagano C.S."/>
            <person name="Sampaio A.H."/>
        </authorList>
    </citation>
    <scope>PROTEIN SEQUENCE</scope>
    <scope>FUNCTION</scope>
    <scope>BIOPHYSICOCHEMICAL PROPERTIES</scope>
    <scope>SUBUNIT</scope>
    <scope>GLYCOSYLATION</scope>
    <scope>MASS SPECTROMETRY</scope>
    <scope>IDENTIFICATION BY MASS SPECTROMETRY</scope>
</reference>
<sequence length="145" mass="16265">QPEEPRCRETPETWSGVLYIISVRNTEVLFTISSSSYDRTEQKIKITMVKSMTNQPLKTVLDDYEKRIRYCKNETLEGELPSFGVPENAHFDGPVETLGAKIAGLGVTVAHYTIAERGFSYFTYHPLGDEGTQCIPITNSIATLD</sequence>
<protein>
    <recommendedName>
        <fullName evidence="5">Halilectin 3, alpha chain</fullName>
        <shortName evidence="3">H-3</shortName>
    </recommendedName>
</protein>
<dbReference type="SMR" id="C0HK22"/>
<dbReference type="GO" id="GO:0030246">
    <property type="term" value="F:carbohydrate binding"/>
    <property type="evidence" value="ECO:0007669"/>
    <property type="project" value="UniProtKB-KW"/>
</dbReference>
<proteinExistence type="evidence at protein level"/>
<feature type="chain" id="PRO_0000437086" description="Halilectin 3, alpha chain" evidence="2">
    <location>
        <begin position="1"/>
        <end position="145" status="greater than"/>
    </location>
</feature>
<feature type="glycosylation site" description="N-linked (GlcNAc...) asparagine" evidence="1">
    <location>
        <position position="73"/>
    </location>
</feature>
<feature type="non-terminal residue" evidence="3">
    <location>
        <position position="145"/>
    </location>
</feature>
<organism>
    <name type="scientific">Haliclona caerulea</name>
    <name type="common">Blue Caribbean sponge</name>
    <name type="synonym">Sigmadocia caerulea</name>
    <dbReference type="NCBI Taxonomy" id="1131259"/>
    <lineage>
        <taxon>Eukaryota</taxon>
        <taxon>Metazoa</taxon>
        <taxon>Porifera</taxon>
        <taxon>Demospongiae</taxon>
        <taxon>Heteroscleromorpha</taxon>
        <taxon>Haplosclerida</taxon>
        <taxon>Chalinidae</taxon>
        <taxon>Haliclona</taxon>
    </lineage>
</organism>
<evidence type="ECO:0000255" key="1">
    <source>
        <dbReference type="PROSITE-ProRule" id="PRU00498"/>
    </source>
</evidence>
<evidence type="ECO:0000269" key="2">
    <source>
    </source>
</evidence>
<evidence type="ECO:0000303" key="3">
    <source>
    </source>
</evidence>
<evidence type="ECO:0000305" key="4"/>
<evidence type="ECO:0000305" key="5">
    <source>
    </source>
</evidence>